<evidence type="ECO:0000250" key="1"/>
<evidence type="ECO:0000305" key="2"/>
<name>CSD_STAEQ</name>
<sequence>MAEHSFDVKAVIKDFPILEQKVNNKRLAYLDSTATSQTPVQVLNVLDDYYKRYNSNVHRGVHTLGSLATDGYENARETVRRFINAKYFEEIIFTRGTTASINIVAHSYGDANISEGDEIVVTEMEHHANIVPWQQLAKRKNATLKFIPMTKDGELQLDDIKATINDKTKIVAIAHVSNVLGTINDVKTIAKIAHEHGAVISVDGAQSAPHMALDMQDIDADFYSFSGHKMLGPTGIGVLYGKRELLQNMEPVEFGGDMIDFVSKYDATWADLPTKFEAGTPLIAQAIGLAEAIHYIENLGFNAIHQHEKELTEYAYEQMLTIDGLEIYGPPKDRRAGVITFNLADIHPHDVATAVDTEGVAVRAGHHCAQPLMKWLGVSSTARASFYVYNTKEDVDQLVQALKQTKEFFSYEF</sequence>
<organism>
    <name type="scientific">Staphylococcus epidermidis (strain ATCC 35984 / DSM 28319 / BCRC 17069 / CCUG 31568 / BM 3577 / RP62A)</name>
    <dbReference type="NCBI Taxonomy" id="176279"/>
    <lineage>
        <taxon>Bacteria</taxon>
        <taxon>Bacillati</taxon>
        <taxon>Bacillota</taxon>
        <taxon>Bacilli</taxon>
        <taxon>Bacillales</taxon>
        <taxon>Staphylococcaceae</taxon>
        <taxon>Staphylococcus</taxon>
    </lineage>
</organism>
<accession>Q5HQQ0</accession>
<reference key="1">
    <citation type="journal article" date="2005" name="J. Bacteriol.">
        <title>Insights on evolution of virulence and resistance from the complete genome analysis of an early methicillin-resistant Staphylococcus aureus strain and a biofilm-producing methicillin-resistant Staphylococcus epidermidis strain.</title>
        <authorList>
            <person name="Gill S.R."/>
            <person name="Fouts D.E."/>
            <person name="Archer G.L."/>
            <person name="Mongodin E.F."/>
            <person name="DeBoy R.T."/>
            <person name="Ravel J."/>
            <person name="Paulsen I.T."/>
            <person name="Kolonay J.F."/>
            <person name="Brinkac L.M."/>
            <person name="Beanan M.J."/>
            <person name="Dodson R.J."/>
            <person name="Daugherty S.C."/>
            <person name="Madupu R."/>
            <person name="Angiuoli S.V."/>
            <person name="Durkin A.S."/>
            <person name="Haft D.H."/>
            <person name="Vamathevan J.J."/>
            <person name="Khouri H."/>
            <person name="Utterback T.R."/>
            <person name="Lee C."/>
            <person name="Dimitrov G."/>
            <person name="Jiang L."/>
            <person name="Qin H."/>
            <person name="Weidman J."/>
            <person name="Tran K."/>
            <person name="Kang K.H."/>
            <person name="Hance I.R."/>
            <person name="Nelson K.E."/>
            <person name="Fraser C.M."/>
        </authorList>
    </citation>
    <scope>NUCLEOTIDE SEQUENCE [LARGE SCALE GENOMIC DNA]</scope>
    <source>
        <strain>ATCC 35984 / DSM 28319 / BCRC 17069 / CCUG 31568 / BM 3577 / RP62A</strain>
    </source>
</reference>
<protein>
    <recommendedName>
        <fullName>Probable cysteine desulfurase</fullName>
        <ecNumber>2.8.1.7</ecNumber>
    </recommendedName>
</protein>
<dbReference type="EC" id="2.8.1.7"/>
<dbReference type="EMBL" id="CP000029">
    <property type="protein sequence ID" value="AAW53865.1"/>
    <property type="molecule type" value="Genomic_DNA"/>
</dbReference>
<dbReference type="RefSeq" id="WP_002438997.1">
    <property type="nucleotide sequence ID" value="NC_002976.3"/>
</dbReference>
<dbReference type="SMR" id="Q5HQQ0"/>
<dbReference type="STRING" id="176279.SERP0498"/>
<dbReference type="KEGG" id="ser:SERP0498"/>
<dbReference type="eggNOG" id="COG0520">
    <property type="taxonomic scope" value="Bacteria"/>
</dbReference>
<dbReference type="HOGENOM" id="CLU_003433_2_5_9"/>
<dbReference type="Proteomes" id="UP000000531">
    <property type="component" value="Chromosome"/>
</dbReference>
<dbReference type="GO" id="GO:0031071">
    <property type="term" value="F:cysteine desulfurase activity"/>
    <property type="evidence" value="ECO:0007669"/>
    <property type="project" value="UniProtKB-EC"/>
</dbReference>
<dbReference type="GO" id="GO:0030170">
    <property type="term" value="F:pyridoxal phosphate binding"/>
    <property type="evidence" value="ECO:0007669"/>
    <property type="project" value="InterPro"/>
</dbReference>
<dbReference type="GO" id="GO:0006534">
    <property type="term" value="P:cysteine metabolic process"/>
    <property type="evidence" value="ECO:0007669"/>
    <property type="project" value="InterPro"/>
</dbReference>
<dbReference type="CDD" id="cd06453">
    <property type="entry name" value="SufS_like"/>
    <property type="match status" value="1"/>
</dbReference>
<dbReference type="Gene3D" id="3.90.1150.10">
    <property type="entry name" value="Aspartate Aminotransferase, domain 1"/>
    <property type="match status" value="1"/>
</dbReference>
<dbReference type="Gene3D" id="3.40.640.10">
    <property type="entry name" value="Type I PLP-dependent aspartate aminotransferase-like (Major domain)"/>
    <property type="match status" value="1"/>
</dbReference>
<dbReference type="InterPro" id="IPR000192">
    <property type="entry name" value="Aminotrans_V_dom"/>
</dbReference>
<dbReference type="InterPro" id="IPR010970">
    <property type="entry name" value="Cys_dSase_SufS"/>
</dbReference>
<dbReference type="InterPro" id="IPR016454">
    <property type="entry name" value="Cysteine_dSase"/>
</dbReference>
<dbReference type="InterPro" id="IPR015424">
    <property type="entry name" value="PyrdxlP-dep_Trfase"/>
</dbReference>
<dbReference type="InterPro" id="IPR015421">
    <property type="entry name" value="PyrdxlP-dep_Trfase_major"/>
</dbReference>
<dbReference type="InterPro" id="IPR015422">
    <property type="entry name" value="PyrdxlP-dep_Trfase_small"/>
</dbReference>
<dbReference type="NCBIfam" id="TIGR01979">
    <property type="entry name" value="sufS"/>
    <property type="match status" value="1"/>
</dbReference>
<dbReference type="PANTHER" id="PTHR43586">
    <property type="entry name" value="CYSTEINE DESULFURASE"/>
    <property type="match status" value="1"/>
</dbReference>
<dbReference type="PANTHER" id="PTHR43586:SF8">
    <property type="entry name" value="CYSTEINE DESULFURASE 1, CHLOROPLASTIC"/>
    <property type="match status" value="1"/>
</dbReference>
<dbReference type="Pfam" id="PF00266">
    <property type="entry name" value="Aminotran_5"/>
    <property type="match status" value="1"/>
</dbReference>
<dbReference type="PIRSF" id="PIRSF005572">
    <property type="entry name" value="NifS"/>
    <property type="match status" value="1"/>
</dbReference>
<dbReference type="SUPFAM" id="SSF53383">
    <property type="entry name" value="PLP-dependent transferases"/>
    <property type="match status" value="1"/>
</dbReference>
<feature type="chain" id="PRO_0000150316" description="Probable cysteine desulfurase">
    <location>
        <begin position="1"/>
        <end position="413"/>
    </location>
</feature>
<feature type="active site" description="Cysteine persulfide intermediate" evidence="1">
    <location>
        <position position="368"/>
    </location>
</feature>
<feature type="modified residue" description="N6-(pyridoxal phosphate)lysine" evidence="1">
    <location>
        <position position="229"/>
    </location>
</feature>
<keyword id="KW-0663">Pyridoxal phosphate</keyword>
<keyword id="KW-1185">Reference proteome</keyword>
<keyword id="KW-0808">Transferase</keyword>
<gene>
    <name type="primary">csd</name>
    <name type="ordered locus">SERP0498</name>
</gene>
<comment type="function">
    <text evidence="1">Catalyzes the removal of elemental sulfur and selenium atoms from L-cysteine, L-cystine, L-selenocysteine, and L-selenocystine to produce L-alanine.</text>
</comment>
<comment type="catalytic activity">
    <reaction>
        <text>(sulfur carrier)-H + L-cysteine = (sulfur carrier)-SH + L-alanine</text>
        <dbReference type="Rhea" id="RHEA:43892"/>
        <dbReference type="Rhea" id="RHEA-COMP:14737"/>
        <dbReference type="Rhea" id="RHEA-COMP:14739"/>
        <dbReference type="ChEBI" id="CHEBI:29917"/>
        <dbReference type="ChEBI" id="CHEBI:35235"/>
        <dbReference type="ChEBI" id="CHEBI:57972"/>
        <dbReference type="ChEBI" id="CHEBI:64428"/>
        <dbReference type="EC" id="2.8.1.7"/>
    </reaction>
</comment>
<comment type="cofactor">
    <cofactor evidence="1">
        <name>pyridoxal 5'-phosphate</name>
        <dbReference type="ChEBI" id="CHEBI:597326"/>
    </cofactor>
</comment>
<comment type="similarity">
    <text evidence="2">Belongs to the class-V pyridoxal-phosphate-dependent aminotransferase family. Csd subfamily.</text>
</comment>
<proteinExistence type="inferred from homology"/>